<keyword id="KW-0067">ATP-binding</keyword>
<keyword id="KW-0963">Cytoplasm</keyword>
<keyword id="KW-0324">Glycolysis</keyword>
<keyword id="KW-0418">Kinase</keyword>
<keyword id="KW-0547">Nucleotide-binding</keyword>
<keyword id="KW-0808">Transferase</keyword>
<gene>
    <name evidence="1" type="primary">pgk</name>
    <name type="ordered locus">ABBFA_001933</name>
</gene>
<accession>B7H3N8</accession>
<dbReference type="EC" id="2.7.2.3" evidence="1"/>
<dbReference type="EMBL" id="CP001172">
    <property type="protein sequence ID" value="ACJ56121.1"/>
    <property type="molecule type" value="Genomic_DNA"/>
</dbReference>
<dbReference type="RefSeq" id="WP_001011093.1">
    <property type="nucleotide sequence ID" value="NZ_CP001172.1"/>
</dbReference>
<dbReference type="SMR" id="B7H3N8"/>
<dbReference type="HOGENOM" id="CLU_025427_0_2_6"/>
<dbReference type="UniPathway" id="UPA00109">
    <property type="reaction ID" value="UER00185"/>
</dbReference>
<dbReference type="Proteomes" id="UP000006924">
    <property type="component" value="Chromosome"/>
</dbReference>
<dbReference type="GO" id="GO:0005829">
    <property type="term" value="C:cytosol"/>
    <property type="evidence" value="ECO:0007669"/>
    <property type="project" value="TreeGrafter"/>
</dbReference>
<dbReference type="GO" id="GO:0043531">
    <property type="term" value="F:ADP binding"/>
    <property type="evidence" value="ECO:0007669"/>
    <property type="project" value="TreeGrafter"/>
</dbReference>
<dbReference type="GO" id="GO:0005524">
    <property type="term" value="F:ATP binding"/>
    <property type="evidence" value="ECO:0007669"/>
    <property type="project" value="UniProtKB-KW"/>
</dbReference>
<dbReference type="GO" id="GO:0004618">
    <property type="term" value="F:phosphoglycerate kinase activity"/>
    <property type="evidence" value="ECO:0007669"/>
    <property type="project" value="UniProtKB-UniRule"/>
</dbReference>
<dbReference type="GO" id="GO:0006094">
    <property type="term" value="P:gluconeogenesis"/>
    <property type="evidence" value="ECO:0007669"/>
    <property type="project" value="TreeGrafter"/>
</dbReference>
<dbReference type="GO" id="GO:0006096">
    <property type="term" value="P:glycolytic process"/>
    <property type="evidence" value="ECO:0007669"/>
    <property type="project" value="UniProtKB-UniRule"/>
</dbReference>
<dbReference type="FunFam" id="3.40.50.1260:FF:000001">
    <property type="entry name" value="Phosphoglycerate kinase"/>
    <property type="match status" value="1"/>
</dbReference>
<dbReference type="FunFam" id="3.40.50.1260:FF:000002">
    <property type="entry name" value="Phosphoglycerate kinase"/>
    <property type="match status" value="1"/>
</dbReference>
<dbReference type="Gene3D" id="3.40.50.1260">
    <property type="entry name" value="Phosphoglycerate kinase, N-terminal domain"/>
    <property type="match status" value="2"/>
</dbReference>
<dbReference type="HAMAP" id="MF_00145">
    <property type="entry name" value="Phosphoglyc_kinase"/>
    <property type="match status" value="1"/>
</dbReference>
<dbReference type="InterPro" id="IPR001576">
    <property type="entry name" value="Phosphoglycerate_kinase"/>
</dbReference>
<dbReference type="InterPro" id="IPR015911">
    <property type="entry name" value="Phosphoglycerate_kinase_CS"/>
</dbReference>
<dbReference type="InterPro" id="IPR015824">
    <property type="entry name" value="Phosphoglycerate_kinase_N"/>
</dbReference>
<dbReference type="InterPro" id="IPR036043">
    <property type="entry name" value="Phosphoglycerate_kinase_sf"/>
</dbReference>
<dbReference type="PANTHER" id="PTHR11406">
    <property type="entry name" value="PHOSPHOGLYCERATE KINASE"/>
    <property type="match status" value="1"/>
</dbReference>
<dbReference type="PANTHER" id="PTHR11406:SF23">
    <property type="entry name" value="PHOSPHOGLYCERATE KINASE 1, CHLOROPLASTIC-RELATED"/>
    <property type="match status" value="1"/>
</dbReference>
<dbReference type="Pfam" id="PF00162">
    <property type="entry name" value="PGK"/>
    <property type="match status" value="1"/>
</dbReference>
<dbReference type="PIRSF" id="PIRSF000724">
    <property type="entry name" value="Pgk"/>
    <property type="match status" value="1"/>
</dbReference>
<dbReference type="PRINTS" id="PR00477">
    <property type="entry name" value="PHGLYCKINASE"/>
</dbReference>
<dbReference type="SUPFAM" id="SSF53748">
    <property type="entry name" value="Phosphoglycerate kinase"/>
    <property type="match status" value="1"/>
</dbReference>
<dbReference type="PROSITE" id="PS00111">
    <property type="entry name" value="PGLYCERATE_KINASE"/>
    <property type="match status" value="1"/>
</dbReference>
<name>PGK_ACIB3</name>
<protein>
    <recommendedName>
        <fullName evidence="1">Phosphoglycerate kinase</fullName>
        <ecNumber evidence="1">2.7.2.3</ecNumber>
    </recommendedName>
</protein>
<organism>
    <name type="scientific">Acinetobacter baumannii (strain AB307-0294)</name>
    <dbReference type="NCBI Taxonomy" id="557600"/>
    <lineage>
        <taxon>Bacteria</taxon>
        <taxon>Pseudomonadati</taxon>
        <taxon>Pseudomonadota</taxon>
        <taxon>Gammaproteobacteria</taxon>
        <taxon>Moraxellales</taxon>
        <taxon>Moraxellaceae</taxon>
        <taxon>Acinetobacter</taxon>
        <taxon>Acinetobacter calcoaceticus/baumannii complex</taxon>
    </lineage>
</organism>
<proteinExistence type="inferred from homology"/>
<evidence type="ECO:0000255" key="1">
    <source>
        <dbReference type="HAMAP-Rule" id="MF_00145"/>
    </source>
</evidence>
<sequence>MNFQRMTDLNLAGKRVLIREDLNVPVKNGVITSDARLRAALPTIKAALEKGAAVMVFSHLGRPVEGEPKPEQSLAPVAAYLTEALGQEVKLFTDYLDGVEVEAGQVVLLENVRFNPGEKKNNPELAQKYAALCDVFVMDAFGTAHRAEASTEGVARFAPVAAAGPLLAAELDALGRAMQTPEKPMVAIVAGSKVSTKLDVLNSLSGICDQLIVGGGIANTFLAAAGYNVGKSLYEADLVETAKQIAAKVSVPLPTDVVVADASQINFEDFLGSLAAAQAVIKKVEDVTANDMILDVGPETAKAFANILTTSKTILWNGPVGVFEVDQFGEGTKALSLAVAQSDAFSIAGGGDTLAAIDKYNVADQIGYISTGGGAFLEFVEGKTLPAVAVLLERA</sequence>
<feature type="chain" id="PRO_1000192790" description="Phosphoglycerate kinase">
    <location>
        <begin position="1"/>
        <end position="395"/>
    </location>
</feature>
<feature type="binding site" evidence="1">
    <location>
        <begin position="21"/>
        <end position="23"/>
    </location>
    <ligand>
        <name>substrate</name>
    </ligand>
</feature>
<feature type="binding site" evidence="1">
    <location>
        <position position="36"/>
    </location>
    <ligand>
        <name>substrate</name>
    </ligand>
</feature>
<feature type="binding site" evidence="1">
    <location>
        <begin position="59"/>
        <end position="62"/>
    </location>
    <ligand>
        <name>substrate</name>
    </ligand>
</feature>
<feature type="binding site" evidence="1">
    <location>
        <position position="113"/>
    </location>
    <ligand>
        <name>substrate</name>
    </ligand>
</feature>
<feature type="binding site" evidence="1">
    <location>
        <position position="146"/>
    </location>
    <ligand>
        <name>substrate</name>
    </ligand>
</feature>
<feature type="binding site" evidence="1">
    <location>
        <position position="197"/>
    </location>
    <ligand>
        <name>ATP</name>
        <dbReference type="ChEBI" id="CHEBI:30616"/>
    </ligand>
</feature>
<feature type="binding site" evidence="1">
    <location>
        <position position="324"/>
    </location>
    <ligand>
        <name>ATP</name>
        <dbReference type="ChEBI" id="CHEBI:30616"/>
    </ligand>
</feature>
<feature type="binding site" evidence="1">
    <location>
        <begin position="350"/>
        <end position="353"/>
    </location>
    <ligand>
        <name>ATP</name>
        <dbReference type="ChEBI" id="CHEBI:30616"/>
    </ligand>
</feature>
<reference key="1">
    <citation type="journal article" date="2008" name="J. Bacteriol.">
        <title>Comparative genome sequence analysis of multidrug-resistant Acinetobacter baumannii.</title>
        <authorList>
            <person name="Adams M.D."/>
            <person name="Goglin K."/>
            <person name="Molyneaux N."/>
            <person name="Hujer K.M."/>
            <person name="Lavender H."/>
            <person name="Jamison J.J."/>
            <person name="MacDonald I.J."/>
            <person name="Martin K.M."/>
            <person name="Russo T."/>
            <person name="Campagnari A.A."/>
            <person name="Hujer A.M."/>
            <person name="Bonomo R.A."/>
            <person name="Gill S.R."/>
        </authorList>
    </citation>
    <scope>NUCLEOTIDE SEQUENCE [LARGE SCALE GENOMIC DNA]</scope>
    <source>
        <strain>AB307-0294</strain>
    </source>
</reference>
<comment type="catalytic activity">
    <reaction evidence="1">
        <text>(2R)-3-phosphoglycerate + ATP = (2R)-3-phospho-glyceroyl phosphate + ADP</text>
        <dbReference type="Rhea" id="RHEA:14801"/>
        <dbReference type="ChEBI" id="CHEBI:30616"/>
        <dbReference type="ChEBI" id="CHEBI:57604"/>
        <dbReference type="ChEBI" id="CHEBI:58272"/>
        <dbReference type="ChEBI" id="CHEBI:456216"/>
        <dbReference type="EC" id="2.7.2.3"/>
    </reaction>
</comment>
<comment type="pathway">
    <text evidence="1">Carbohydrate degradation; glycolysis; pyruvate from D-glyceraldehyde 3-phosphate: step 2/5.</text>
</comment>
<comment type="subunit">
    <text evidence="1">Monomer.</text>
</comment>
<comment type="subcellular location">
    <subcellularLocation>
        <location evidence="1">Cytoplasm</location>
    </subcellularLocation>
</comment>
<comment type="similarity">
    <text evidence="1">Belongs to the phosphoglycerate kinase family.</text>
</comment>